<dbReference type="EC" id="2.1.1.14" evidence="1"/>
<dbReference type="EMBL" id="CP000703">
    <property type="protein sequence ID" value="ABQ48210.1"/>
    <property type="molecule type" value="Genomic_DNA"/>
</dbReference>
<dbReference type="RefSeq" id="WP_000207637.1">
    <property type="nucleotide sequence ID" value="NC_009487.1"/>
</dbReference>
<dbReference type="SMR" id="A5IPT7"/>
<dbReference type="KEGG" id="saj:SaurJH9_0404"/>
<dbReference type="HOGENOM" id="CLU_013175_0_0_9"/>
<dbReference type="UniPathway" id="UPA00051">
    <property type="reaction ID" value="UER00082"/>
</dbReference>
<dbReference type="GO" id="GO:0003871">
    <property type="term" value="F:5-methyltetrahydropteroyltriglutamate-homocysteine S-methyltransferase activity"/>
    <property type="evidence" value="ECO:0007669"/>
    <property type="project" value="UniProtKB-UniRule"/>
</dbReference>
<dbReference type="GO" id="GO:0008270">
    <property type="term" value="F:zinc ion binding"/>
    <property type="evidence" value="ECO:0007669"/>
    <property type="project" value="InterPro"/>
</dbReference>
<dbReference type="GO" id="GO:0009086">
    <property type="term" value="P:methionine biosynthetic process"/>
    <property type="evidence" value="ECO:0007669"/>
    <property type="project" value="UniProtKB-UniRule"/>
</dbReference>
<dbReference type="GO" id="GO:0032259">
    <property type="term" value="P:methylation"/>
    <property type="evidence" value="ECO:0007669"/>
    <property type="project" value="UniProtKB-KW"/>
</dbReference>
<dbReference type="CDD" id="cd03311">
    <property type="entry name" value="CIMS_C_terminal_like"/>
    <property type="match status" value="1"/>
</dbReference>
<dbReference type="CDD" id="cd03312">
    <property type="entry name" value="CIMS_N_terminal_like"/>
    <property type="match status" value="1"/>
</dbReference>
<dbReference type="Gene3D" id="3.20.20.210">
    <property type="match status" value="2"/>
</dbReference>
<dbReference type="HAMAP" id="MF_00172">
    <property type="entry name" value="Meth_synth"/>
    <property type="match status" value="1"/>
</dbReference>
<dbReference type="InterPro" id="IPR013215">
    <property type="entry name" value="Cbl-indep_Met_Synth_N"/>
</dbReference>
<dbReference type="InterPro" id="IPR006276">
    <property type="entry name" value="Cobalamin-indep_Met_synthase"/>
</dbReference>
<dbReference type="InterPro" id="IPR002629">
    <property type="entry name" value="Met_Synth_C/arc"/>
</dbReference>
<dbReference type="InterPro" id="IPR038071">
    <property type="entry name" value="UROD/MetE-like_sf"/>
</dbReference>
<dbReference type="NCBIfam" id="TIGR01371">
    <property type="entry name" value="met_syn_B12ind"/>
    <property type="match status" value="1"/>
</dbReference>
<dbReference type="NCBIfam" id="NF003556">
    <property type="entry name" value="PRK05222.1"/>
    <property type="match status" value="1"/>
</dbReference>
<dbReference type="PANTHER" id="PTHR30519">
    <property type="entry name" value="5-METHYLTETRAHYDROPTEROYLTRIGLUTAMATE--HOMOCYSTEINE METHYLTRANSFERASE"/>
    <property type="match status" value="1"/>
</dbReference>
<dbReference type="Pfam" id="PF08267">
    <property type="entry name" value="Meth_synt_1"/>
    <property type="match status" value="1"/>
</dbReference>
<dbReference type="Pfam" id="PF01717">
    <property type="entry name" value="Meth_synt_2"/>
    <property type="match status" value="1"/>
</dbReference>
<dbReference type="PIRSF" id="PIRSF000382">
    <property type="entry name" value="MeTrfase_B12_ind"/>
    <property type="match status" value="1"/>
</dbReference>
<dbReference type="SUPFAM" id="SSF51726">
    <property type="entry name" value="UROD/MetE-like"/>
    <property type="match status" value="2"/>
</dbReference>
<proteinExistence type="inferred from homology"/>
<keyword id="KW-0028">Amino-acid biosynthesis</keyword>
<keyword id="KW-0479">Metal-binding</keyword>
<keyword id="KW-0486">Methionine biosynthesis</keyword>
<keyword id="KW-0489">Methyltransferase</keyword>
<keyword id="KW-0677">Repeat</keyword>
<keyword id="KW-0808">Transferase</keyword>
<keyword id="KW-0862">Zinc</keyword>
<protein>
    <recommendedName>
        <fullName evidence="1">5-methyltetrahydropteroyltriglutamate--homocysteine methyltransferase</fullName>
        <ecNumber evidence="1">2.1.1.14</ecNumber>
    </recommendedName>
    <alternativeName>
        <fullName evidence="1">Cobalamin-independent methionine synthase</fullName>
    </alternativeName>
    <alternativeName>
        <fullName evidence="1">Methionine synthase, vitamin-B12 independent isozyme</fullName>
    </alternativeName>
</protein>
<organism>
    <name type="scientific">Staphylococcus aureus (strain JH9)</name>
    <dbReference type="NCBI Taxonomy" id="359786"/>
    <lineage>
        <taxon>Bacteria</taxon>
        <taxon>Bacillati</taxon>
        <taxon>Bacillota</taxon>
        <taxon>Bacilli</taxon>
        <taxon>Bacillales</taxon>
        <taxon>Staphylococcaceae</taxon>
        <taxon>Staphylococcus</taxon>
    </lineage>
</organism>
<comment type="function">
    <text evidence="1">Catalyzes the transfer of a methyl group from 5-methyltetrahydrofolate to homocysteine resulting in methionine formation.</text>
</comment>
<comment type="catalytic activity">
    <reaction evidence="1">
        <text>5-methyltetrahydropteroyltri-L-glutamate + L-homocysteine = tetrahydropteroyltri-L-glutamate + L-methionine</text>
        <dbReference type="Rhea" id="RHEA:21196"/>
        <dbReference type="ChEBI" id="CHEBI:57844"/>
        <dbReference type="ChEBI" id="CHEBI:58140"/>
        <dbReference type="ChEBI" id="CHEBI:58199"/>
        <dbReference type="ChEBI" id="CHEBI:58207"/>
        <dbReference type="EC" id="2.1.1.14"/>
    </reaction>
</comment>
<comment type="cofactor">
    <cofactor evidence="1">
        <name>Zn(2+)</name>
        <dbReference type="ChEBI" id="CHEBI:29105"/>
    </cofactor>
    <text evidence="1">Binds 1 zinc ion per subunit.</text>
</comment>
<comment type="pathway">
    <text evidence="1">Amino-acid biosynthesis; L-methionine biosynthesis via de novo pathway; L-methionine from L-homocysteine (MetE route): step 1/1.</text>
</comment>
<comment type="similarity">
    <text evidence="1">Belongs to the vitamin-B12 independent methionine synthase family.</text>
</comment>
<accession>A5IPT7</accession>
<sequence length="742" mass="85014">MTTIKTSNLGFPRLGRTREWKKAIESYWAKKISKEELDQTLTDLHKENLLLQKYYHLDSIPVGDFSLYDHILDTSLLFNIIPERFQGRTIDDDLLFDIARGNKDHVASALIKWFNTNYHYIVPEWDNVEPKVSRNVLLDRFKYAQSLNVNAHPVIVGPITFVKLSKGGHQTFEEKVKTLLPLYKEVFESLIDAGAEYIQVDEPILVTDDSESYENITREAYDYFEKAGVAKKLVIQTYFERAHLKFLSSLPVGGLGLDFVHDNGYNLKQIEAGDFDKSKTLYAGIIDGRNVWASDIEAKKVLIDKLLAHTNELVIQPSSSLLHVPVSLDDETLDTSVGEGLSFATEKLDELDALRRLLNQNDSVKYDKLKARYERFQNQSFKNLDYDFESVRTSRQSPFAQRIEQQQKRLNLPDLPTTTIGSFPQSREVRKYRADWKNKRITDEAYETFLKNEIARWIKIQEDIGLDVLVHGEFERNDMVEFFGEKLQGFLVTKFGWVQSYGSRAVKPPIIYGDVKWTAPLTVDETVYAQSLTDKPVKGMLTGPVTILNWSFERVDLPRKVVQDQIALAINEEVLALEAAGIKVIQVDEPALREGLPLRSEYHEQYLKDAVLSFKLATSSVRDETQIHTHMCYSQFGQIIHAIHDLDADVISIETSRSHGDLIKDFEDINYDLGIGLGVYDIHSPRIPTKEEITTAINRSLQQIDRSLFWVNPDCGLKTRKEEEVKDALTVLVNAVKAKRQE</sequence>
<evidence type="ECO:0000255" key="1">
    <source>
        <dbReference type="HAMAP-Rule" id="MF_00172"/>
    </source>
</evidence>
<feature type="chain" id="PRO_1000077119" description="5-methyltetrahydropteroyltriglutamate--homocysteine methyltransferase">
    <location>
        <begin position="1"/>
        <end position="742"/>
    </location>
</feature>
<feature type="active site" description="Proton donor" evidence="1">
    <location>
        <position position="683"/>
    </location>
</feature>
<feature type="binding site" evidence="1">
    <location>
        <begin position="18"/>
        <end position="21"/>
    </location>
    <ligand>
        <name>5-methyltetrahydropteroyltri-L-glutamate</name>
        <dbReference type="ChEBI" id="CHEBI:58207"/>
    </ligand>
</feature>
<feature type="binding site" evidence="1">
    <location>
        <position position="112"/>
    </location>
    <ligand>
        <name>5-methyltetrahydropteroyltri-L-glutamate</name>
        <dbReference type="ChEBI" id="CHEBI:58207"/>
    </ligand>
</feature>
<feature type="binding site" evidence="1">
    <location>
        <begin position="420"/>
        <end position="422"/>
    </location>
    <ligand>
        <name>L-homocysteine</name>
        <dbReference type="ChEBI" id="CHEBI:58199"/>
    </ligand>
</feature>
<feature type="binding site" evidence="1">
    <location>
        <begin position="420"/>
        <end position="422"/>
    </location>
    <ligand>
        <name>L-methionine</name>
        <dbReference type="ChEBI" id="CHEBI:57844"/>
    </ligand>
</feature>
<feature type="binding site" evidence="1">
    <location>
        <position position="473"/>
    </location>
    <ligand>
        <name>L-homocysteine</name>
        <dbReference type="ChEBI" id="CHEBI:58199"/>
    </ligand>
</feature>
<feature type="binding site" evidence="1">
    <location>
        <position position="473"/>
    </location>
    <ligand>
        <name>L-methionine</name>
        <dbReference type="ChEBI" id="CHEBI:57844"/>
    </ligand>
</feature>
<feature type="binding site" evidence="1">
    <location>
        <position position="550"/>
    </location>
    <ligand>
        <name>5-methyltetrahydropteroyltri-L-glutamate</name>
        <dbReference type="ChEBI" id="CHEBI:58207"/>
    </ligand>
</feature>
<feature type="binding site" evidence="1">
    <location>
        <position position="588"/>
    </location>
    <ligand>
        <name>L-homocysteine</name>
        <dbReference type="ChEBI" id="CHEBI:58199"/>
    </ligand>
</feature>
<feature type="binding site" evidence="1">
    <location>
        <position position="588"/>
    </location>
    <ligand>
        <name>L-methionine</name>
        <dbReference type="ChEBI" id="CHEBI:57844"/>
    </ligand>
</feature>
<feature type="binding site" evidence="1">
    <location>
        <position position="594"/>
    </location>
    <ligand>
        <name>5-methyltetrahydropteroyltri-L-glutamate</name>
        <dbReference type="ChEBI" id="CHEBI:58207"/>
    </ligand>
</feature>
<feature type="binding site" evidence="1">
    <location>
        <position position="630"/>
    </location>
    <ligand>
        <name>Zn(2+)</name>
        <dbReference type="ChEBI" id="CHEBI:29105"/>
        <note>catalytic</note>
    </ligand>
</feature>
<feature type="binding site" evidence="1">
    <location>
        <position position="632"/>
    </location>
    <ligand>
        <name>Zn(2+)</name>
        <dbReference type="ChEBI" id="CHEBI:29105"/>
        <note>catalytic</note>
    </ligand>
</feature>
<feature type="binding site" evidence="1">
    <location>
        <position position="654"/>
    </location>
    <ligand>
        <name>Zn(2+)</name>
        <dbReference type="ChEBI" id="CHEBI:29105"/>
        <note>catalytic</note>
    </ligand>
</feature>
<feature type="binding site" evidence="1">
    <location>
        <position position="715"/>
    </location>
    <ligand>
        <name>Zn(2+)</name>
        <dbReference type="ChEBI" id="CHEBI:29105"/>
        <note>catalytic</note>
    </ligand>
</feature>
<reference key="1">
    <citation type="submission" date="2007-05" db="EMBL/GenBank/DDBJ databases">
        <title>Complete sequence of chromosome of Staphylococcus aureus subsp. aureus JH9.</title>
        <authorList>
            <consortium name="US DOE Joint Genome Institute"/>
            <person name="Copeland A."/>
            <person name="Lucas S."/>
            <person name="Lapidus A."/>
            <person name="Barry K."/>
            <person name="Detter J.C."/>
            <person name="Glavina del Rio T."/>
            <person name="Hammon N."/>
            <person name="Israni S."/>
            <person name="Pitluck S."/>
            <person name="Chain P."/>
            <person name="Malfatti S."/>
            <person name="Shin M."/>
            <person name="Vergez L."/>
            <person name="Schmutz J."/>
            <person name="Larimer F."/>
            <person name="Land M."/>
            <person name="Hauser L."/>
            <person name="Kyrpides N."/>
            <person name="Kim E."/>
            <person name="Tomasz A."/>
            <person name="Richardson P."/>
        </authorList>
    </citation>
    <scope>NUCLEOTIDE SEQUENCE [LARGE SCALE GENOMIC DNA]</scope>
    <source>
        <strain>JH9</strain>
    </source>
</reference>
<gene>
    <name evidence="1" type="primary">metE</name>
    <name type="ordered locus">SaurJH9_0404</name>
</gene>
<name>METE_STAA9</name>